<organism>
    <name type="scientific">Streptococcus equi subsp. zooepidemicus (strain MGCS10565)</name>
    <dbReference type="NCBI Taxonomy" id="552526"/>
    <lineage>
        <taxon>Bacteria</taxon>
        <taxon>Bacillati</taxon>
        <taxon>Bacillota</taxon>
        <taxon>Bacilli</taxon>
        <taxon>Lactobacillales</taxon>
        <taxon>Streptococcaceae</taxon>
        <taxon>Streptococcus</taxon>
    </lineage>
</organism>
<feature type="chain" id="PRO_0000380474" description="DNA ligase">
    <location>
        <begin position="1"/>
        <end position="652"/>
    </location>
</feature>
<feature type="domain" description="BRCT" evidence="1">
    <location>
        <begin position="577"/>
        <end position="652"/>
    </location>
</feature>
<feature type="active site" description="N6-AMP-lysine intermediate" evidence="1">
    <location>
        <position position="109"/>
    </location>
</feature>
<feature type="binding site" evidence="1">
    <location>
        <begin position="29"/>
        <end position="33"/>
    </location>
    <ligand>
        <name>NAD(+)</name>
        <dbReference type="ChEBI" id="CHEBI:57540"/>
    </ligand>
</feature>
<feature type="binding site" evidence="1">
    <location>
        <begin position="78"/>
        <end position="79"/>
    </location>
    <ligand>
        <name>NAD(+)</name>
        <dbReference type="ChEBI" id="CHEBI:57540"/>
    </ligand>
</feature>
<feature type="binding site" evidence="1">
    <location>
        <position position="107"/>
    </location>
    <ligand>
        <name>NAD(+)</name>
        <dbReference type="ChEBI" id="CHEBI:57540"/>
    </ligand>
</feature>
<feature type="binding site" evidence="1">
    <location>
        <position position="130"/>
    </location>
    <ligand>
        <name>NAD(+)</name>
        <dbReference type="ChEBI" id="CHEBI:57540"/>
    </ligand>
</feature>
<feature type="binding site" evidence="1">
    <location>
        <position position="164"/>
    </location>
    <ligand>
        <name>NAD(+)</name>
        <dbReference type="ChEBI" id="CHEBI:57540"/>
    </ligand>
</feature>
<feature type="binding site" evidence="1">
    <location>
        <position position="278"/>
    </location>
    <ligand>
        <name>NAD(+)</name>
        <dbReference type="ChEBI" id="CHEBI:57540"/>
    </ligand>
</feature>
<feature type="binding site" evidence="1">
    <location>
        <position position="302"/>
    </location>
    <ligand>
        <name>NAD(+)</name>
        <dbReference type="ChEBI" id="CHEBI:57540"/>
    </ligand>
</feature>
<feature type="binding site" evidence="1">
    <location>
        <position position="395"/>
    </location>
    <ligand>
        <name>Zn(2+)</name>
        <dbReference type="ChEBI" id="CHEBI:29105"/>
    </ligand>
</feature>
<feature type="binding site" evidence="1">
    <location>
        <position position="398"/>
    </location>
    <ligand>
        <name>Zn(2+)</name>
        <dbReference type="ChEBI" id="CHEBI:29105"/>
    </ligand>
</feature>
<feature type="binding site" evidence="1">
    <location>
        <position position="413"/>
    </location>
    <ligand>
        <name>Zn(2+)</name>
        <dbReference type="ChEBI" id="CHEBI:29105"/>
    </ligand>
</feature>
<feature type="binding site" evidence="1">
    <location>
        <position position="418"/>
    </location>
    <ligand>
        <name>Zn(2+)</name>
        <dbReference type="ChEBI" id="CHEBI:29105"/>
    </ligand>
</feature>
<proteinExistence type="inferred from homology"/>
<name>DNLJ_STREM</name>
<gene>
    <name evidence="1" type="primary">ligA</name>
    <name type="ordered locus">Sez_0784</name>
</gene>
<evidence type="ECO:0000255" key="1">
    <source>
        <dbReference type="HAMAP-Rule" id="MF_01588"/>
    </source>
</evidence>
<reference key="1">
    <citation type="journal article" date="2008" name="PLoS ONE">
        <title>Genome sequence of a lancefield group C Streptococcus zooepidemicus strain causing epidemic nephritis: new information about an old disease.</title>
        <authorList>
            <person name="Beres S.B."/>
            <person name="Sesso R."/>
            <person name="Pinto S.W.L."/>
            <person name="Hoe N.P."/>
            <person name="Porcella S.F."/>
            <person name="Deleo F.R."/>
            <person name="Musser J.M."/>
        </authorList>
    </citation>
    <scope>NUCLEOTIDE SEQUENCE [LARGE SCALE GENOMIC DNA]</scope>
    <source>
        <strain>MGCS10565</strain>
    </source>
</reference>
<comment type="function">
    <text evidence="1">DNA ligase that catalyzes the formation of phosphodiester linkages between 5'-phosphoryl and 3'-hydroxyl groups in double-stranded DNA using NAD as a coenzyme and as the energy source for the reaction. It is essential for DNA replication and repair of damaged DNA.</text>
</comment>
<comment type="catalytic activity">
    <reaction evidence="1">
        <text>NAD(+) + (deoxyribonucleotide)n-3'-hydroxyl + 5'-phospho-(deoxyribonucleotide)m = (deoxyribonucleotide)n+m + AMP + beta-nicotinamide D-nucleotide.</text>
        <dbReference type="EC" id="6.5.1.2"/>
    </reaction>
</comment>
<comment type="cofactor">
    <cofactor evidence="1">
        <name>Mg(2+)</name>
        <dbReference type="ChEBI" id="CHEBI:18420"/>
    </cofactor>
    <cofactor evidence="1">
        <name>Mn(2+)</name>
        <dbReference type="ChEBI" id="CHEBI:29035"/>
    </cofactor>
</comment>
<comment type="similarity">
    <text evidence="1">Belongs to the NAD-dependent DNA ligase family. LigA subfamily.</text>
</comment>
<accession>B4U2C7</accession>
<dbReference type="EC" id="6.5.1.2" evidence="1"/>
<dbReference type="EMBL" id="CP001129">
    <property type="protein sequence ID" value="ACG62144.1"/>
    <property type="molecule type" value="Genomic_DNA"/>
</dbReference>
<dbReference type="RefSeq" id="WP_012515418.1">
    <property type="nucleotide sequence ID" value="NC_011134.1"/>
</dbReference>
<dbReference type="SMR" id="B4U2C7"/>
<dbReference type="KEGG" id="sez:Sez_0784"/>
<dbReference type="HOGENOM" id="CLU_007764_2_1_9"/>
<dbReference type="Proteomes" id="UP000001873">
    <property type="component" value="Chromosome"/>
</dbReference>
<dbReference type="GO" id="GO:0005829">
    <property type="term" value="C:cytosol"/>
    <property type="evidence" value="ECO:0007669"/>
    <property type="project" value="TreeGrafter"/>
</dbReference>
<dbReference type="GO" id="GO:0003677">
    <property type="term" value="F:DNA binding"/>
    <property type="evidence" value="ECO:0007669"/>
    <property type="project" value="InterPro"/>
</dbReference>
<dbReference type="GO" id="GO:0003911">
    <property type="term" value="F:DNA ligase (NAD+) activity"/>
    <property type="evidence" value="ECO:0007669"/>
    <property type="project" value="UniProtKB-UniRule"/>
</dbReference>
<dbReference type="GO" id="GO:0046872">
    <property type="term" value="F:metal ion binding"/>
    <property type="evidence" value="ECO:0007669"/>
    <property type="project" value="UniProtKB-KW"/>
</dbReference>
<dbReference type="GO" id="GO:0006281">
    <property type="term" value="P:DNA repair"/>
    <property type="evidence" value="ECO:0007669"/>
    <property type="project" value="UniProtKB-KW"/>
</dbReference>
<dbReference type="GO" id="GO:0006260">
    <property type="term" value="P:DNA replication"/>
    <property type="evidence" value="ECO:0007669"/>
    <property type="project" value="UniProtKB-KW"/>
</dbReference>
<dbReference type="CDD" id="cd17748">
    <property type="entry name" value="BRCT_DNA_ligase_like"/>
    <property type="match status" value="1"/>
</dbReference>
<dbReference type="CDD" id="cd00114">
    <property type="entry name" value="LIGANc"/>
    <property type="match status" value="1"/>
</dbReference>
<dbReference type="FunFam" id="1.10.150.20:FF:000007">
    <property type="entry name" value="DNA ligase"/>
    <property type="match status" value="1"/>
</dbReference>
<dbReference type="FunFam" id="2.40.50.140:FF:000012">
    <property type="entry name" value="DNA ligase"/>
    <property type="match status" value="1"/>
</dbReference>
<dbReference type="FunFam" id="3.30.470.30:FF:000001">
    <property type="entry name" value="DNA ligase"/>
    <property type="match status" value="1"/>
</dbReference>
<dbReference type="Gene3D" id="6.20.10.30">
    <property type="match status" value="1"/>
</dbReference>
<dbReference type="Gene3D" id="1.10.150.20">
    <property type="entry name" value="5' to 3' exonuclease, C-terminal subdomain"/>
    <property type="match status" value="2"/>
</dbReference>
<dbReference type="Gene3D" id="3.40.50.10190">
    <property type="entry name" value="BRCT domain"/>
    <property type="match status" value="1"/>
</dbReference>
<dbReference type="Gene3D" id="3.30.470.30">
    <property type="entry name" value="DNA ligase/mRNA capping enzyme"/>
    <property type="match status" value="1"/>
</dbReference>
<dbReference type="Gene3D" id="1.10.287.610">
    <property type="entry name" value="Helix hairpin bin"/>
    <property type="match status" value="1"/>
</dbReference>
<dbReference type="Gene3D" id="2.40.50.140">
    <property type="entry name" value="Nucleic acid-binding proteins"/>
    <property type="match status" value="1"/>
</dbReference>
<dbReference type="HAMAP" id="MF_01588">
    <property type="entry name" value="DNA_ligase_A"/>
    <property type="match status" value="1"/>
</dbReference>
<dbReference type="InterPro" id="IPR001357">
    <property type="entry name" value="BRCT_dom"/>
</dbReference>
<dbReference type="InterPro" id="IPR036420">
    <property type="entry name" value="BRCT_dom_sf"/>
</dbReference>
<dbReference type="InterPro" id="IPR041663">
    <property type="entry name" value="DisA/LigA_HHH"/>
</dbReference>
<dbReference type="InterPro" id="IPR001679">
    <property type="entry name" value="DNA_ligase"/>
</dbReference>
<dbReference type="InterPro" id="IPR018239">
    <property type="entry name" value="DNA_ligase_AS"/>
</dbReference>
<dbReference type="InterPro" id="IPR033136">
    <property type="entry name" value="DNA_ligase_CS"/>
</dbReference>
<dbReference type="InterPro" id="IPR013839">
    <property type="entry name" value="DNAligase_adenylation"/>
</dbReference>
<dbReference type="InterPro" id="IPR013840">
    <property type="entry name" value="DNAligase_N"/>
</dbReference>
<dbReference type="InterPro" id="IPR003583">
    <property type="entry name" value="Hlx-hairpin-Hlx_DNA-bd_motif"/>
</dbReference>
<dbReference type="InterPro" id="IPR012340">
    <property type="entry name" value="NA-bd_OB-fold"/>
</dbReference>
<dbReference type="InterPro" id="IPR004150">
    <property type="entry name" value="NAD_DNA_ligase_OB"/>
</dbReference>
<dbReference type="InterPro" id="IPR010994">
    <property type="entry name" value="RuvA_2-like"/>
</dbReference>
<dbReference type="InterPro" id="IPR004149">
    <property type="entry name" value="Znf_DNAligase_C4"/>
</dbReference>
<dbReference type="NCBIfam" id="TIGR00575">
    <property type="entry name" value="dnlj"/>
    <property type="match status" value="1"/>
</dbReference>
<dbReference type="NCBIfam" id="NF005932">
    <property type="entry name" value="PRK07956.1"/>
    <property type="match status" value="1"/>
</dbReference>
<dbReference type="PANTHER" id="PTHR23389">
    <property type="entry name" value="CHROMOSOME TRANSMISSION FIDELITY FACTOR 18"/>
    <property type="match status" value="1"/>
</dbReference>
<dbReference type="PANTHER" id="PTHR23389:SF9">
    <property type="entry name" value="DNA LIGASE"/>
    <property type="match status" value="1"/>
</dbReference>
<dbReference type="Pfam" id="PF00533">
    <property type="entry name" value="BRCT"/>
    <property type="match status" value="1"/>
</dbReference>
<dbReference type="Pfam" id="PF01653">
    <property type="entry name" value="DNA_ligase_aden"/>
    <property type="match status" value="1"/>
</dbReference>
<dbReference type="Pfam" id="PF03120">
    <property type="entry name" value="DNA_ligase_OB"/>
    <property type="match status" value="1"/>
</dbReference>
<dbReference type="Pfam" id="PF03119">
    <property type="entry name" value="DNA_ligase_ZBD"/>
    <property type="match status" value="1"/>
</dbReference>
<dbReference type="Pfam" id="PF12826">
    <property type="entry name" value="HHH_2"/>
    <property type="match status" value="1"/>
</dbReference>
<dbReference type="Pfam" id="PF14520">
    <property type="entry name" value="HHH_5"/>
    <property type="match status" value="1"/>
</dbReference>
<dbReference type="PIRSF" id="PIRSF001604">
    <property type="entry name" value="LigA"/>
    <property type="match status" value="1"/>
</dbReference>
<dbReference type="SMART" id="SM00292">
    <property type="entry name" value="BRCT"/>
    <property type="match status" value="1"/>
</dbReference>
<dbReference type="SMART" id="SM00278">
    <property type="entry name" value="HhH1"/>
    <property type="match status" value="3"/>
</dbReference>
<dbReference type="SMART" id="SM00532">
    <property type="entry name" value="LIGANc"/>
    <property type="match status" value="1"/>
</dbReference>
<dbReference type="SUPFAM" id="SSF52113">
    <property type="entry name" value="BRCT domain"/>
    <property type="match status" value="1"/>
</dbReference>
<dbReference type="SUPFAM" id="SSF56091">
    <property type="entry name" value="DNA ligase/mRNA capping enzyme, catalytic domain"/>
    <property type="match status" value="1"/>
</dbReference>
<dbReference type="SUPFAM" id="SSF50249">
    <property type="entry name" value="Nucleic acid-binding proteins"/>
    <property type="match status" value="1"/>
</dbReference>
<dbReference type="SUPFAM" id="SSF47781">
    <property type="entry name" value="RuvA domain 2-like"/>
    <property type="match status" value="1"/>
</dbReference>
<dbReference type="PROSITE" id="PS50172">
    <property type="entry name" value="BRCT"/>
    <property type="match status" value="1"/>
</dbReference>
<dbReference type="PROSITE" id="PS01055">
    <property type="entry name" value="DNA_LIGASE_N1"/>
    <property type="match status" value="1"/>
</dbReference>
<dbReference type="PROSITE" id="PS01056">
    <property type="entry name" value="DNA_LIGASE_N2"/>
    <property type="match status" value="1"/>
</dbReference>
<sequence>MKKRIRELTDLLNQYRQEYYTNDAPSVSDSEYDKLYRELVELEQTYPAYILKDSPTQLVGGTILTGFQKYQHQYPLFSLQDAFSREELNAFDQRIKSAFPEAEYLAELKIDGLSISLVYEAGILKVGATRGDGTIGENITENIKNIKDIPKRLSQALDVTIRGEAYMSRKAFKTINEERQENGEPEFANPRNAAAGTLRQLDTRIVAKRQLATFLYQEVGLEAADSQQRTLERLADLGFSVNSHYLLSSSMNDIWDFIQSIEATREELPYEIDGVVVKVNQLAIQEELGFTVKAPRWAIAYKFPAEEKEAEIVSVDWTVGRTGVVTPTANLTPVQLAGTTVSRATLHNVDYIAEKDIRIGDTVVVYKAGDIIPAVLRVVEAKRSNQTPMPIPTACPSCQSQLVHFEDEVALRCINPLCPSLIQRSLEHFASRQAMNIAGLGPAVVEKLYSAGLVHDVTDIYRLSLEDLLMLDGIKEKSAEKLLAAIEQSKANSAEKLLFGLGIRHIGAKASRLILETYGDLETLLSVTAEELAQIDGLGLVIGQSLVQYFQQDQATQLLAELKSAGVNLAYLGQRPDRQAELFGLTVVLTGKLEKLNRTQAKEKLEQLGAKVTGSVSKKTDLVVAGSEAGSKLAKAQQLGIRIEDEDWLLNL</sequence>
<protein>
    <recommendedName>
        <fullName evidence="1">DNA ligase</fullName>
        <ecNumber evidence="1">6.5.1.2</ecNumber>
    </recommendedName>
    <alternativeName>
        <fullName evidence="1">Polydeoxyribonucleotide synthase [NAD(+)]</fullName>
    </alternativeName>
</protein>
<keyword id="KW-0227">DNA damage</keyword>
<keyword id="KW-0234">DNA repair</keyword>
<keyword id="KW-0235">DNA replication</keyword>
<keyword id="KW-0436">Ligase</keyword>
<keyword id="KW-0460">Magnesium</keyword>
<keyword id="KW-0464">Manganese</keyword>
<keyword id="KW-0479">Metal-binding</keyword>
<keyword id="KW-0520">NAD</keyword>
<keyword id="KW-0862">Zinc</keyword>